<organism>
    <name type="scientific">Aliivibrio fischeri (strain MJ11)</name>
    <name type="common">Vibrio fischeri</name>
    <dbReference type="NCBI Taxonomy" id="388396"/>
    <lineage>
        <taxon>Bacteria</taxon>
        <taxon>Pseudomonadati</taxon>
        <taxon>Pseudomonadota</taxon>
        <taxon>Gammaproteobacteria</taxon>
        <taxon>Vibrionales</taxon>
        <taxon>Vibrionaceae</taxon>
        <taxon>Aliivibrio</taxon>
    </lineage>
</organism>
<dbReference type="EMBL" id="CP001139">
    <property type="protein sequence ID" value="ACH66635.1"/>
    <property type="molecule type" value="Genomic_DNA"/>
</dbReference>
<dbReference type="RefSeq" id="WP_005420557.1">
    <property type="nucleotide sequence ID" value="NC_011184.1"/>
</dbReference>
<dbReference type="SMR" id="B5F9X5"/>
<dbReference type="KEGG" id="vfm:VFMJ11_2095"/>
<dbReference type="HOGENOM" id="CLU_047155_0_2_6"/>
<dbReference type="Proteomes" id="UP000001857">
    <property type="component" value="Chromosome I"/>
</dbReference>
<dbReference type="GO" id="GO:0005737">
    <property type="term" value="C:cytoplasm"/>
    <property type="evidence" value="ECO:0007669"/>
    <property type="project" value="UniProtKB-SubCell"/>
</dbReference>
<dbReference type="GO" id="GO:0003746">
    <property type="term" value="F:translation elongation factor activity"/>
    <property type="evidence" value="ECO:0007669"/>
    <property type="project" value="UniProtKB-UniRule"/>
</dbReference>
<dbReference type="CDD" id="cd14275">
    <property type="entry name" value="UBA_EF-Ts"/>
    <property type="match status" value="1"/>
</dbReference>
<dbReference type="FunFam" id="1.10.286.20:FF:000001">
    <property type="entry name" value="Elongation factor Ts"/>
    <property type="match status" value="1"/>
</dbReference>
<dbReference type="FunFam" id="1.10.8.10:FF:000001">
    <property type="entry name" value="Elongation factor Ts"/>
    <property type="match status" value="1"/>
</dbReference>
<dbReference type="FunFam" id="3.30.479.20:FF:000001">
    <property type="entry name" value="Elongation factor Ts"/>
    <property type="match status" value="1"/>
</dbReference>
<dbReference type="Gene3D" id="1.10.286.20">
    <property type="match status" value="1"/>
</dbReference>
<dbReference type="Gene3D" id="1.10.8.10">
    <property type="entry name" value="DNA helicase RuvA subunit, C-terminal domain"/>
    <property type="match status" value="1"/>
</dbReference>
<dbReference type="Gene3D" id="3.30.479.20">
    <property type="entry name" value="Elongation factor Ts, dimerisation domain"/>
    <property type="match status" value="2"/>
</dbReference>
<dbReference type="HAMAP" id="MF_00050">
    <property type="entry name" value="EF_Ts"/>
    <property type="match status" value="1"/>
</dbReference>
<dbReference type="InterPro" id="IPR036402">
    <property type="entry name" value="EF-Ts_dimer_sf"/>
</dbReference>
<dbReference type="InterPro" id="IPR001816">
    <property type="entry name" value="Transl_elong_EFTs/EF1B"/>
</dbReference>
<dbReference type="InterPro" id="IPR014039">
    <property type="entry name" value="Transl_elong_EFTs/EF1B_dimer"/>
</dbReference>
<dbReference type="InterPro" id="IPR018101">
    <property type="entry name" value="Transl_elong_Ts_CS"/>
</dbReference>
<dbReference type="InterPro" id="IPR009060">
    <property type="entry name" value="UBA-like_sf"/>
</dbReference>
<dbReference type="NCBIfam" id="TIGR00116">
    <property type="entry name" value="tsf"/>
    <property type="match status" value="1"/>
</dbReference>
<dbReference type="PANTHER" id="PTHR11741">
    <property type="entry name" value="ELONGATION FACTOR TS"/>
    <property type="match status" value="1"/>
</dbReference>
<dbReference type="PANTHER" id="PTHR11741:SF0">
    <property type="entry name" value="ELONGATION FACTOR TS, MITOCHONDRIAL"/>
    <property type="match status" value="1"/>
</dbReference>
<dbReference type="Pfam" id="PF00889">
    <property type="entry name" value="EF_TS"/>
    <property type="match status" value="1"/>
</dbReference>
<dbReference type="SUPFAM" id="SSF54713">
    <property type="entry name" value="Elongation factor Ts (EF-Ts), dimerisation domain"/>
    <property type="match status" value="2"/>
</dbReference>
<dbReference type="SUPFAM" id="SSF46934">
    <property type="entry name" value="UBA-like"/>
    <property type="match status" value="1"/>
</dbReference>
<dbReference type="PROSITE" id="PS01126">
    <property type="entry name" value="EF_TS_1"/>
    <property type="match status" value="1"/>
</dbReference>
<dbReference type="PROSITE" id="PS01127">
    <property type="entry name" value="EF_TS_2"/>
    <property type="match status" value="1"/>
</dbReference>
<protein>
    <recommendedName>
        <fullName evidence="1">Elongation factor Ts</fullName>
        <shortName evidence="1">EF-Ts</shortName>
    </recommendedName>
</protein>
<gene>
    <name evidence="1" type="primary">tsf</name>
    <name type="ordered locus">VFMJ11_2095</name>
</gene>
<keyword id="KW-0963">Cytoplasm</keyword>
<keyword id="KW-0251">Elongation factor</keyword>
<keyword id="KW-0648">Protein biosynthesis</keyword>
<sequence length="281" mass="29717">MATVTAALVKELRERTGAGMMECKKALVEANADIELAIENMRKSGAAKAAKKAGNVAAEGAIIIKEENGVAALLEVNCQTDFVAKDANFTAFAAEVAAAAVASQATVEELQAQFEETRVALVAKIGENINIRRVQYVAGSALASYRHGEKIGVVVAGEGDAETLKHIAMHVAASKPEYVNPSDVPADVVEKEKAVQVEIAMNEGKPQEIAEKMVIGRMKKFTGEVSLTGQAFIMEPKKTVAEILKEKGASVSNFVRLEVGEGIEKAAEMSFADEVAAVQKG</sequence>
<feature type="chain" id="PRO_1000189901" description="Elongation factor Ts">
    <location>
        <begin position="1"/>
        <end position="281"/>
    </location>
</feature>
<feature type="region of interest" description="Involved in Mg(2+) ion dislocation from EF-Tu" evidence="1">
    <location>
        <begin position="80"/>
        <end position="83"/>
    </location>
</feature>
<accession>B5F9X5</accession>
<comment type="function">
    <text evidence="1">Associates with the EF-Tu.GDP complex and induces the exchange of GDP to GTP. It remains bound to the aminoacyl-tRNA.EF-Tu.GTP complex up to the GTP hydrolysis stage on the ribosome.</text>
</comment>
<comment type="subcellular location">
    <subcellularLocation>
        <location evidence="1">Cytoplasm</location>
    </subcellularLocation>
</comment>
<comment type="similarity">
    <text evidence="1">Belongs to the EF-Ts family.</text>
</comment>
<name>EFTS_ALIFM</name>
<evidence type="ECO:0000255" key="1">
    <source>
        <dbReference type="HAMAP-Rule" id="MF_00050"/>
    </source>
</evidence>
<reference key="1">
    <citation type="submission" date="2008-08" db="EMBL/GenBank/DDBJ databases">
        <title>Complete sequence of Vibrio fischeri strain MJ11.</title>
        <authorList>
            <person name="Mandel M.J."/>
            <person name="Stabb E.V."/>
            <person name="Ruby E.G."/>
            <person name="Ferriera S."/>
            <person name="Johnson J."/>
            <person name="Kravitz S."/>
            <person name="Beeson K."/>
            <person name="Sutton G."/>
            <person name="Rogers Y.-H."/>
            <person name="Friedman R."/>
            <person name="Frazier M."/>
            <person name="Venter J.C."/>
        </authorList>
    </citation>
    <scope>NUCLEOTIDE SEQUENCE [LARGE SCALE GENOMIC DNA]</scope>
    <source>
        <strain>MJ11</strain>
    </source>
</reference>
<proteinExistence type="inferred from homology"/>